<reference key="1">
    <citation type="journal article" date="2008" name="BMC Genomics">
        <title>A conifer genomics resource of 200,000 spruce (Picea spp.) ESTs and 6,464 high-quality, sequence-finished full-length cDNAs for Sitka spruce (Picea sitchensis).</title>
        <authorList>
            <person name="Ralph S.G."/>
            <person name="Chun H.J.E."/>
            <person name="Kolosova N."/>
            <person name="Cooper D."/>
            <person name="Oddy C."/>
            <person name="Ritland C.E."/>
            <person name="Kirkpatrick R."/>
            <person name="Moore R."/>
            <person name="Barber S."/>
            <person name="Holt R.A."/>
            <person name="Jones S.J.M."/>
            <person name="Marra M.A."/>
            <person name="Douglas C.J."/>
            <person name="Ritland K."/>
            <person name="Bohlmann J."/>
        </authorList>
    </citation>
    <scope>NUCLEOTIDE SEQUENCE [LARGE SCALE MRNA]</scope>
</reference>
<reference key="2">
    <citation type="journal article" date="2014" name="Plant Physiol.">
        <title>Functional and evolutionary analysis of the CASPARIAN STRIP MEMBRANE DOMAIN PROTEIN family.</title>
        <authorList>
            <person name="Roppolo D."/>
            <person name="Boeckmann B."/>
            <person name="Pfister A."/>
            <person name="Boutet E."/>
            <person name="Rubio M.C."/>
            <person name="Denervaud-Tendon V."/>
            <person name="Vermeer J.E."/>
            <person name="Gheyselinck J."/>
            <person name="Xenarios I."/>
            <person name="Geldner N."/>
        </authorList>
    </citation>
    <scope>GENE FAMILY</scope>
    <scope>NOMENCLATURE</scope>
</reference>
<keyword id="KW-1003">Cell membrane</keyword>
<keyword id="KW-0472">Membrane</keyword>
<keyword id="KW-0812">Transmembrane</keyword>
<keyword id="KW-1133">Transmembrane helix</keyword>
<protein>
    <recommendedName>
        <fullName>CASP-like protein 5A1</fullName>
        <shortName>PsCASPL5A1</shortName>
    </recommendedName>
</protein>
<evidence type="ECO:0000250" key="1"/>
<evidence type="ECO:0000255" key="2"/>
<evidence type="ECO:0000305" key="3"/>
<proteinExistence type="evidence at transcript level"/>
<accession>A9NYX5</accession>
<dbReference type="EMBL" id="EF086578">
    <property type="protein sequence ID" value="ABK25836.1"/>
    <property type="molecule type" value="mRNA"/>
</dbReference>
<dbReference type="OMA" id="IAMPRHT"/>
<dbReference type="GO" id="GO:0005886">
    <property type="term" value="C:plasma membrane"/>
    <property type="evidence" value="ECO:0007669"/>
    <property type="project" value="UniProtKB-SubCell"/>
</dbReference>
<dbReference type="InterPro" id="IPR006702">
    <property type="entry name" value="CASP_dom"/>
</dbReference>
<dbReference type="InterPro" id="IPR045009">
    <property type="entry name" value="CASPL-5"/>
</dbReference>
<dbReference type="PANTHER" id="PTHR32021:SF1">
    <property type="entry name" value="CASP-LIKE PROTEIN 5A1"/>
    <property type="match status" value="1"/>
</dbReference>
<dbReference type="PANTHER" id="PTHR32021">
    <property type="entry name" value="CASP-LIKE PROTEIN 5B3"/>
    <property type="match status" value="1"/>
</dbReference>
<dbReference type="Pfam" id="PF04535">
    <property type="entry name" value="CASP_dom"/>
    <property type="match status" value="1"/>
</dbReference>
<name>CSPLA_PICSI</name>
<feature type="chain" id="PRO_0000418684" description="CASP-like protein 5A1">
    <location>
        <begin position="1"/>
        <end position="185"/>
    </location>
</feature>
<feature type="topological domain" description="Cytoplasmic" evidence="2">
    <location>
        <begin position="1"/>
        <end position="45"/>
    </location>
</feature>
<feature type="transmembrane region" description="Helical" evidence="2">
    <location>
        <begin position="46"/>
        <end position="66"/>
    </location>
</feature>
<feature type="topological domain" description="Extracellular" evidence="2">
    <location>
        <begin position="67"/>
        <end position="76"/>
    </location>
</feature>
<feature type="transmembrane region" description="Helical" evidence="2">
    <location>
        <begin position="77"/>
        <end position="97"/>
    </location>
</feature>
<feature type="topological domain" description="Cytoplasmic" evidence="2">
    <location>
        <begin position="98"/>
        <end position="121"/>
    </location>
</feature>
<feature type="transmembrane region" description="Helical" evidence="2">
    <location>
        <begin position="122"/>
        <end position="142"/>
    </location>
</feature>
<feature type="topological domain" description="Extracellular" evidence="2">
    <location>
        <begin position="143"/>
        <end position="160"/>
    </location>
</feature>
<feature type="transmembrane region" description="Helical" evidence="2">
    <location>
        <begin position="161"/>
        <end position="181"/>
    </location>
</feature>
<feature type="topological domain" description="Cytoplasmic" evidence="2">
    <location>
        <begin position="182"/>
        <end position="185"/>
    </location>
</feature>
<comment type="subunit">
    <text evidence="1">Homodimer and heterodimers.</text>
</comment>
<comment type="subcellular location">
    <subcellularLocation>
        <location evidence="1">Cell membrane</location>
        <topology evidence="1">Multi-pass membrane protein</topology>
    </subcellularLocation>
</comment>
<comment type="similarity">
    <text evidence="3">Belongs to the Casparian strip membrane proteins (CASP) family.</text>
</comment>
<organism>
    <name type="scientific">Picea sitchensis</name>
    <name type="common">Sitka spruce</name>
    <name type="synonym">Pinus sitchensis</name>
    <dbReference type="NCBI Taxonomy" id="3332"/>
    <lineage>
        <taxon>Eukaryota</taxon>
        <taxon>Viridiplantae</taxon>
        <taxon>Streptophyta</taxon>
        <taxon>Embryophyta</taxon>
        <taxon>Tracheophyta</taxon>
        <taxon>Spermatophyta</taxon>
        <taxon>Pinopsida</taxon>
        <taxon>Pinidae</taxon>
        <taxon>Conifers I</taxon>
        <taxon>Pinales</taxon>
        <taxon>Pinaceae</taxon>
        <taxon>Picea</taxon>
    </lineage>
</organism>
<sequence>MNVSHPAVHPVGVPPALGGHAVPPRMRMRVRMEYLVFQGMPLPGTLGGLVLRLGQFCSALIAFSVMLSVRDFSVTAFCYLVAATVLQCLWSLAMAVIDVYALLVKRSLRNPLLVSIFVVGDGVTATLTFAAACASAGVIVLIGNDIAMCKDNPCANYEAAIIMAFLSWFMVSISFILTFWLLATL</sequence>